<accession>A4QLY5</accession>
<evidence type="ECO:0000250" key="1"/>
<evidence type="ECO:0000255" key="2">
    <source>
        <dbReference type="HAMAP-Rule" id="MF_00491"/>
    </source>
</evidence>
<gene>
    <name evidence="2" type="primary">ndhD</name>
</gene>
<geneLocation type="chloroplast"/>
<name>NU4C_NASOF</name>
<sequence length="500" mass="56027">MNDFPWLTIIVVFPISAGSLMLFLPHRGNKVNKWYTICICILELLLTTYAFCYNFKMDDPLIQLSEDYKWINFLDFYWRMGIDGLSIGTILLTGFITTLATLAAFPVTRDSKLFHFLMLAMYSGQIGSFSSRDLLLFFIMWELELIPVYLLLSMWGGKKRLYSATKFILYTAGSSIFLLIGVLGISLYGSNEPTLNLELLANQSYPVTLEILFYIGFLIAFAVKSPIIPLHTWLPDTHGEAHYSTCMLLAGILLKMGAYGLVRINMELLPHAHSMFSPWLMVVGTIQIIYAASTSPGQRNLKKRIAYSSVSHMGFIIIGISSITDPGLNGAILQIISHGFIGAALFFLAGTSYDRIRLVYLDEMGGMAISIPKIFTMFTILSMASLALPGMSGFVAELIVFFGIITSQKYFLISKILIIFVMAIGMILTPIYLLSMSRQMFYGYKLINVKNFSFFDSGPRELFLSISILLPIIGIGIYPDFVLSLASDKVESILSNYFYG</sequence>
<keyword id="KW-0150">Chloroplast</keyword>
<keyword id="KW-0472">Membrane</keyword>
<keyword id="KW-0520">NAD</keyword>
<keyword id="KW-0521">NADP</keyword>
<keyword id="KW-0934">Plastid</keyword>
<keyword id="KW-0618">Plastoquinone</keyword>
<keyword id="KW-0874">Quinone</keyword>
<keyword id="KW-0691">RNA editing</keyword>
<keyword id="KW-0793">Thylakoid</keyword>
<keyword id="KW-1278">Translocase</keyword>
<keyword id="KW-0812">Transmembrane</keyword>
<keyword id="KW-1133">Transmembrane helix</keyword>
<feature type="chain" id="PRO_0000343294" description="NAD(P)H-quinone oxidoreductase chain 4, chloroplastic">
    <location>
        <begin position="1"/>
        <end position="500"/>
    </location>
</feature>
<feature type="transmembrane region" description="Helical" evidence="2">
    <location>
        <begin position="4"/>
        <end position="24"/>
    </location>
</feature>
<feature type="transmembrane region" description="Helical" evidence="2">
    <location>
        <begin position="35"/>
        <end position="55"/>
    </location>
</feature>
<feature type="transmembrane region" description="Helical" evidence="2">
    <location>
        <begin position="87"/>
        <end position="107"/>
    </location>
</feature>
<feature type="transmembrane region" description="Helical" evidence="2">
    <location>
        <begin position="113"/>
        <end position="130"/>
    </location>
</feature>
<feature type="transmembrane region" description="Helical" evidence="2">
    <location>
        <begin position="134"/>
        <end position="154"/>
    </location>
</feature>
<feature type="transmembrane region" description="Helical" evidence="2">
    <location>
        <begin position="167"/>
        <end position="187"/>
    </location>
</feature>
<feature type="transmembrane region" description="Helical" evidence="2">
    <location>
        <begin position="211"/>
        <end position="231"/>
    </location>
</feature>
<feature type="transmembrane region" description="Helical" evidence="2">
    <location>
        <begin position="242"/>
        <end position="262"/>
    </location>
</feature>
<feature type="transmembrane region" description="Helical" evidence="2">
    <location>
        <begin position="272"/>
        <end position="292"/>
    </location>
</feature>
<feature type="transmembrane region" description="Helical" evidence="2">
    <location>
        <begin position="305"/>
        <end position="325"/>
    </location>
</feature>
<feature type="transmembrane region" description="Helical" evidence="2">
    <location>
        <begin position="330"/>
        <end position="350"/>
    </location>
</feature>
<feature type="transmembrane region" description="Helical" evidence="2">
    <location>
        <begin position="386"/>
        <end position="406"/>
    </location>
</feature>
<feature type="transmembrane region" description="Helical" evidence="2">
    <location>
        <begin position="416"/>
        <end position="436"/>
    </location>
</feature>
<feature type="transmembrane region" description="Helical" evidence="2">
    <location>
        <begin position="462"/>
        <end position="482"/>
    </location>
</feature>
<dbReference type="EC" id="7.1.1.-" evidence="2"/>
<dbReference type="EMBL" id="AP009376">
    <property type="protein sequence ID" value="BAF50690.1"/>
    <property type="status" value="ALT_SEQ"/>
    <property type="molecule type" value="Genomic_DNA"/>
</dbReference>
<dbReference type="RefSeq" id="YP_001123865.2">
    <property type="nucleotide sequence ID" value="NC_009275.1"/>
</dbReference>
<dbReference type="SMR" id="A4QLY5"/>
<dbReference type="GeneID" id="4962157"/>
<dbReference type="GO" id="GO:0009535">
    <property type="term" value="C:chloroplast thylakoid membrane"/>
    <property type="evidence" value="ECO:0007669"/>
    <property type="project" value="UniProtKB-SubCell"/>
</dbReference>
<dbReference type="GO" id="GO:0008137">
    <property type="term" value="F:NADH dehydrogenase (ubiquinone) activity"/>
    <property type="evidence" value="ECO:0007669"/>
    <property type="project" value="InterPro"/>
</dbReference>
<dbReference type="GO" id="GO:0048039">
    <property type="term" value="F:ubiquinone binding"/>
    <property type="evidence" value="ECO:0007669"/>
    <property type="project" value="TreeGrafter"/>
</dbReference>
<dbReference type="GO" id="GO:0042773">
    <property type="term" value="P:ATP synthesis coupled electron transport"/>
    <property type="evidence" value="ECO:0007669"/>
    <property type="project" value="InterPro"/>
</dbReference>
<dbReference type="GO" id="GO:0015990">
    <property type="term" value="P:electron transport coupled proton transport"/>
    <property type="evidence" value="ECO:0007669"/>
    <property type="project" value="TreeGrafter"/>
</dbReference>
<dbReference type="HAMAP" id="MF_00491">
    <property type="entry name" value="NDH1_NuoM"/>
    <property type="match status" value="1"/>
</dbReference>
<dbReference type="InterPro" id="IPR022997">
    <property type="entry name" value="NADH_Q_OxRdtase_chain4"/>
</dbReference>
<dbReference type="InterPro" id="IPR010227">
    <property type="entry name" value="NADH_Q_OxRdtase_chainM/4"/>
</dbReference>
<dbReference type="InterPro" id="IPR003918">
    <property type="entry name" value="NADH_UbQ_OxRdtase"/>
</dbReference>
<dbReference type="InterPro" id="IPR001750">
    <property type="entry name" value="ND/Mrp_TM"/>
</dbReference>
<dbReference type="NCBIfam" id="TIGR01972">
    <property type="entry name" value="NDH_I_M"/>
    <property type="match status" value="1"/>
</dbReference>
<dbReference type="PANTHER" id="PTHR43507:SF21">
    <property type="entry name" value="NAD(P)H-QUINONE OXIDOREDUCTASE CHAIN 4, CHLOROPLASTIC"/>
    <property type="match status" value="1"/>
</dbReference>
<dbReference type="PANTHER" id="PTHR43507">
    <property type="entry name" value="NADH-UBIQUINONE OXIDOREDUCTASE CHAIN 4"/>
    <property type="match status" value="1"/>
</dbReference>
<dbReference type="Pfam" id="PF00361">
    <property type="entry name" value="Proton_antipo_M"/>
    <property type="match status" value="1"/>
</dbReference>
<dbReference type="PRINTS" id="PR01437">
    <property type="entry name" value="NUOXDRDTASE4"/>
</dbReference>
<protein>
    <recommendedName>
        <fullName evidence="2">NAD(P)H-quinone oxidoreductase chain 4, chloroplastic</fullName>
        <ecNumber evidence="2">7.1.1.-</ecNumber>
    </recommendedName>
    <alternativeName>
        <fullName evidence="2">NAD(P)H dehydrogenase, chain 4</fullName>
    </alternativeName>
    <alternativeName>
        <fullName evidence="2">NADH-plastoquinone oxidoreductase chain 4</fullName>
    </alternativeName>
</protein>
<proteinExistence type="inferred from homology"/>
<comment type="catalytic activity">
    <reaction evidence="2">
        <text>a plastoquinone + NADH + (n+1) H(+)(in) = a plastoquinol + NAD(+) + n H(+)(out)</text>
        <dbReference type="Rhea" id="RHEA:42608"/>
        <dbReference type="Rhea" id="RHEA-COMP:9561"/>
        <dbReference type="Rhea" id="RHEA-COMP:9562"/>
        <dbReference type="ChEBI" id="CHEBI:15378"/>
        <dbReference type="ChEBI" id="CHEBI:17757"/>
        <dbReference type="ChEBI" id="CHEBI:57540"/>
        <dbReference type="ChEBI" id="CHEBI:57945"/>
        <dbReference type="ChEBI" id="CHEBI:62192"/>
    </reaction>
</comment>
<comment type="catalytic activity">
    <reaction evidence="2">
        <text>a plastoquinone + NADPH + (n+1) H(+)(in) = a plastoquinol + NADP(+) + n H(+)(out)</text>
        <dbReference type="Rhea" id="RHEA:42612"/>
        <dbReference type="Rhea" id="RHEA-COMP:9561"/>
        <dbReference type="Rhea" id="RHEA-COMP:9562"/>
        <dbReference type="ChEBI" id="CHEBI:15378"/>
        <dbReference type="ChEBI" id="CHEBI:17757"/>
        <dbReference type="ChEBI" id="CHEBI:57783"/>
        <dbReference type="ChEBI" id="CHEBI:58349"/>
        <dbReference type="ChEBI" id="CHEBI:62192"/>
    </reaction>
</comment>
<comment type="subcellular location">
    <subcellularLocation>
        <location evidence="2">Plastid</location>
        <location evidence="2">Chloroplast thylakoid membrane</location>
        <topology evidence="2">Multi-pass membrane protein</topology>
    </subcellularLocation>
</comment>
<comment type="RNA editing">
    <location>
        <position position="1" evidence="1"/>
    </location>
    <text evidence="1">The initiator methionine is created by RNA editing.</text>
</comment>
<comment type="similarity">
    <text evidence="2">Belongs to the complex I subunit 4 family.</text>
</comment>
<reference key="1">
    <citation type="submission" date="2007-03" db="EMBL/GenBank/DDBJ databases">
        <title>Sequencing analysis of Nasturtium officinale chloroplast DNA.</title>
        <authorList>
            <person name="Hosouchi T."/>
            <person name="Tsuruoka H."/>
            <person name="Kotani H."/>
        </authorList>
    </citation>
    <scope>NUCLEOTIDE SEQUENCE [LARGE SCALE GENOMIC DNA]</scope>
</reference>
<organism>
    <name type="scientific">Nasturtium officinale</name>
    <name type="common">Watercress</name>
    <name type="synonym">Rorippa nasturtium-aquaticum</name>
    <dbReference type="NCBI Taxonomy" id="65948"/>
    <lineage>
        <taxon>Eukaryota</taxon>
        <taxon>Viridiplantae</taxon>
        <taxon>Streptophyta</taxon>
        <taxon>Embryophyta</taxon>
        <taxon>Tracheophyta</taxon>
        <taxon>Spermatophyta</taxon>
        <taxon>Magnoliopsida</taxon>
        <taxon>eudicotyledons</taxon>
        <taxon>Gunneridae</taxon>
        <taxon>Pentapetalae</taxon>
        <taxon>rosids</taxon>
        <taxon>malvids</taxon>
        <taxon>Brassicales</taxon>
        <taxon>Brassicaceae</taxon>
        <taxon>Cardamineae</taxon>
        <taxon>Nasturtium</taxon>
    </lineage>
</organism>